<evidence type="ECO:0000255" key="1">
    <source>
        <dbReference type="HAMAP-Rule" id="MF_00368"/>
    </source>
</evidence>
<evidence type="ECO:0000305" key="2"/>
<keyword id="KW-1185">Reference proteome</keyword>
<keyword id="KW-0687">Ribonucleoprotein</keyword>
<keyword id="KW-0689">Ribosomal protein</keyword>
<dbReference type="EMBL" id="CP000767">
    <property type="protein sequence ID" value="EAU01264.1"/>
    <property type="molecule type" value="Genomic_DNA"/>
</dbReference>
<dbReference type="RefSeq" id="WP_009650519.1">
    <property type="nucleotide sequence ID" value="NC_009715.2"/>
</dbReference>
<dbReference type="SMR" id="A7GZK0"/>
<dbReference type="STRING" id="360105.CCV52592_0180"/>
<dbReference type="KEGG" id="ccv:CCV52592_0180"/>
<dbReference type="HOGENOM" id="CLU_086499_3_0_7"/>
<dbReference type="OrthoDB" id="9811748at2"/>
<dbReference type="Proteomes" id="UP000006380">
    <property type="component" value="Chromosome"/>
</dbReference>
<dbReference type="GO" id="GO:0022625">
    <property type="term" value="C:cytosolic large ribosomal subunit"/>
    <property type="evidence" value="ECO:0007669"/>
    <property type="project" value="TreeGrafter"/>
</dbReference>
<dbReference type="GO" id="GO:0003729">
    <property type="term" value="F:mRNA binding"/>
    <property type="evidence" value="ECO:0007669"/>
    <property type="project" value="TreeGrafter"/>
</dbReference>
<dbReference type="GO" id="GO:0003735">
    <property type="term" value="F:structural constituent of ribosome"/>
    <property type="evidence" value="ECO:0007669"/>
    <property type="project" value="InterPro"/>
</dbReference>
<dbReference type="GO" id="GO:0006412">
    <property type="term" value="P:translation"/>
    <property type="evidence" value="ECO:0007669"/>
    <property type="project" value="UniProtKB-UniRule"/>
</dbReference>
<dbReference type="CDD" id="cd00387">
    <property type="entry name" value="Ribosomal_L7_L12"/>
    <property type="match status" value="1"/>
</dbReference>
<dbReference type="FunFam" id="3.30.1390.10:FF:000001">
    <property type="entry name" value="50S ribosomal protein L7/L12"/>
    <property type="match status" value="1"/>
</dbReference>
<dbReference type="Gene3D" id="3.30.1390.10">
    <property type="match status" value="1"/>
</dbReference>
<dbReference type="Gene3D" id="1.20.5.710">
    <property type="entry name" value="Single helix bin"/>
    <property type="match status" value="1"/>
</dbReference>
<dbReference type="HAMAP" id="MF_00368">
    <property type="entry name" value="Ribosomal_bL12"/>
    <property type="match status" value="1"/>
</dbReference>
<dbReference type="InterPro" id="IPR000206">
    <property type="entry name" value="Ribosomal_bL12"/>
</dbReference>
<dbReference type="InterPro" id="IPR013823">
    <property type="entry name" value="Ribosomal_bL12_C"/>
</dbReference>
<dbReference type="InterPro" id="IPR014719">
    <property type="entry name" value="Ribosomal_bL12_C/ClpS-like"/>
</dbReference>
<dbReference type="InterPro" id="IPR008932">
    <property type="entry name" value="Ribosomal_bL12_oligo"/>
</dbReference>
<dbReference type="InterPro" id="IPR036235">
    <property type="entry name" value="Ribosomal_bL12_oligo_N_sf"/>
</dbReference>
<dbReference type="NCBIfam" id="TIGR00855">
    <property type="entry name" value="L12"/>
    <property type="match status" value="1"/>
</dbReference>
<dbReference type="PANTHER" id="PTHR45987">
    <property type="entry name" value="39S RIBOSOMAL PROTEIN L12"/>
    <property type="match status" value="1"/>
</dbReference>
<dbReference type="PANTHER" id="PTHR45987:SF4">
    <property type="entry name" value="LARGE RIBOSOMAL SUBUNIT PROTEIN BL12M"/>
    <property type="match status" value="1"/>
</dbReference>
<dbReference type="Pfam" id="PF00542">
    <property type="entry name" value="Ribosomal_L12"/>
    <property type="match status" value="1"/>
</dbReference>
<dbReference type="Pfam" id="PF16320">
    <property type="entry name" value="Ribosomal_L12_N"/>
    <property type="match status" value="1"/>
</dbReference>
<dbReference type="SUPFAM" id="SSF54736">
    <property type="entry name" value="ClpS-like"/>
    <property type="match status" value="1"/>
</dbReference>
<dbReference type="SUPFAM" id="SSF48300">
    <property type="entry name" value="Ribosomal protein L7/12, oligomerisation (N-terminal) domain"/>
    <property type="match status" value="1"/>
</dbReference>
<protein>
    <recommendedName>
        <fullName evidence="1">Large ribosomal subunit protein bL12</fullName>
    </recommendedName>
    <alternativeName>
        <fullName evidence="2">50S ribosomal protein L7/L12</fullName>
    </alternativeName>
</protein>
<gene>
    <name evidence="1" type="primary">rplL</name>
    <name type="ordered locus">Ccur92_13380</name>
    <name type="ORF">CCV52592_0180</name>
</gene>
<feature type="chain" id="PRO_1000006979" description="Large ribosomal subunit protein bL12">
    <location>
        <begin position="1"/>
        <end position="125"/>
    </location>
</feature>
<organism>
    <name type="scientific">Campylobacter curvus (strain 525.92)</name>
    <dbReference type="NCBI Taxonomy" id="360105"/>
    <lineage>
        <taxon>Bacteria</taxon>
        <taxon>Pseudomonadati</taxon>
        <taxon>Campylobacterota</taxon>
        <taxon>Epsilonproteobacteria</taxon>
        <taxon>Campylobacterales</taxon>
        <taxon>Campylobacteraceae</taxon>
        <taxon>Campylobacter</taxon>
    </lineage>
</organism>
<sequence>MAITKEDVLEFISNLSVLELSELVKEFEEKFGVSAAPVMVAGGAVAGGAAEAAEEKTEFNLVLVDSGDKKINVIKVVRALTGLGLKEAKDAVEGTPSVLKEGISKDEAEAAKKELEEAGAKVELK</sequence>
<accession>A7GZK0</accession>
<name>RL7_CAMC5</name>
<comment type="function">
    <text evidence="1">Forms part of the ribosomal stalk which helps the ribosome interact with GTP-bound translation factors. Is thus essential for accurate translation.</text>
</comment>
<comment type="subunit">
    <text evidence="1">Homodimer. Part of the ribosomal stalk of the 50S ribosomal subunit. Forms a multimeric L10(L12)X complex, where L10 forms an elongated spine to which 2 to 4 L12 dimers bind in a sequential fashion. Binds GTP-bound translation factors.</text>
</comment>
<comment type="similarity">
    <text evidence="1">Belongs to the bacterial ribosomal protein bL12 family.</text>
</comment>
<proteinExistence type="inferred from homology"/>
<reference key="1">
    <citation type="submission" date="2007-07" db="EMBL/GenBank/DDBJ databases">
        <title>Genome sequence of Campylobacter curvus 525.92 isolated from human feces.</title>
        <authorList>
            <person name="Fouts D.E."/>
            <person name="Mongodin E.F."/>
            <person name="Puiu D."/>
            <person name="Sebastian Y."/>
            <person name="Miller W.G."/>
            <person name="Mandrell R.E."/>
            <person name="Lastovica A.J."/>
            <person name="Nelson K.E."/>
        </authorList>
    </citation>
    <scope>NUCLEOTIDE SEQUENCE [LARGE SCALE GENOMIC DNA]</scope>
    <source>
        <strain>525.92</strain>
    </source>
</reference>